<keyword id="KW-0066">ATP synthesis</keyword>
<keyword id="KW-1003">Cell membrane</keyword>
<keyword id="KW-0138">CF(0)</keyword>
<keyword id="KW-0375">Hydrogen ion transport</keyword>
<keyword id="KW-0406">Ion transport</keyword>
<keyword id="KW-0446">Lipid-binding</keyword>
<keyword id="KW-0472">Membrane</keyword>
<keyword id="KW-1185">Reference proteome</keyword>
<keyword id="KW-0812">Transmembrane</keyword>
<keyword id="KW-1133">Transmembrane helix</keyword>
<keyword id="KW-0813">Transport</keyword>
<organism>
    <name type="scientific">Mycobacterium tuberculosis (strain CDC 1551 / Oshkosh)</name>
    <dbReference type="NCBI Taxonomy" id="83331"/>
    <lineage>
        <taxon>Bacteria</taxon>
        <taxon>Bacillati</taxon>
        <taxon>Actinomycetota</taxon>
        <taxon>Actinomycetes</taxon>
        <taxon>Mycobacteriales</taxon>
        <taxon>Mycobacteriaceae</taxon>
        <taxon>Mycobacterium</taxon>
        <taxon>Mycobacterium tuberculosis complex</taxon>
    </lineage>
</organism>
<feature type="chain" id="PRO_0000426898" description="ATP synthase subunit c">
    <location>
        <begin position="1"/>
        <end position="81"/>
    </location>
</feature>
<feature type="transmembrane region" description="Helical" evidence="2">
    <location>
        <begin position="5"/>
        <end position="25"/>
    </location>
</feature>
<feature type="transmembrane region" description="Helical" evidence="2">
    <location>
        <begin position="57"/>
        <end position="77"/>
    </location>
</feature>
<feature type="site" description="Reversibly protonated during proton transport" evidence="2">
    <location>
        <position position="61"/>
    </location>
</feature>
<reference key="1">
    <citation type="journal article" date="2002" name="J. Bacteriol.">
        <title>Whole-genome comparison of Mycobacterium tuberculosis clinical and laboratory strains.</title>
        <authorList>
            <person name="Fleischmann R.D."/>
            <person name="Alland D."/>
            <person name="Eisen J.A."/>
            <person name="Carpenter L."/>
            <person name="White O."/>
            <person name="Peterson J.D."/>
            <person name="DeBoy R.T."/>
            <person name="Dodson R.J."/>
            <person name="Gwinn M.L."/>
            <person name="Haft D.H."/>
            <person name="Hickey E.K."/>
            <person name="Kolonay J.F."/>
            <person name="Nelson W.C."/>
            <person name="Umayam L.A."/>
            <person name="Ermolaeva M.D."/>
            <person name="Salzberg S.L."/>
            <person name="Delcher A."/>
            <person name="Utterback T.R."/>
            <person name="Weidman J.F."/>
            <person name="Khouri H.M."/>
            <person name="Gill J."/>
            <person name="Mikula A."/>
            <person name="Bishai W."/>
            <person name="Jacobs W.R. Jr."/>
            <person name="Venter J.C."/>
            <person name="Fraser C.M."/>
        </authorList>
    </citation>
    <scope>NUCLEOTIDE SEQUENCE [LARGE SCALE GENOMIC DNA]</scope>
    <source>
        <strain>CDC 1551 / Oshkosh</strain>
    </source>
</reference>
<proteinExistence type="inferred from homology"/>
<comment type="function">
    <text evidence="2">F(1)F(0) ATP synthase produces ATP from ADP in the presence of a proton or sodium gradient. F-type ATPases consist of two structural domains, F(1) containing the extramembraneous catalytic core and F(0) containing the membrane proton channel, linked together by a central stalk and a peripheral stalk. During catalysis, ATP synthesis in the catalytic domain of F(1) is coupled via a rotary mechanism of the central stalk subunits to proton translocation.</text>
</comment>
<comment type="function">
    <text evidence="2">Key component of the F(0) channel; it plays a direct role in translocation across the membrane. A homomeric c-ring of between 10-14 subunits forms the central stalk rotor element with the F(1) delta and epsilon subunits.</text>
</comment>
<comment type="subunit">
    <text evidence="2">F-type ATPases have 2 components, F(1) - the catalytic core - and F(0) - the membrane proton channel. F(1) has five subunits: alpha(3), beta(3), gamma(1), delta(1), epsilon(1). F(0) has three main subunits: a(1), b(2) and c(10-14). The alpha and beta chains form an alternating ring which encloses part of the gamma chain. F(1) is attached to F(0) by a central stalk formed by the gamma and epsilon chains, while a peripheral stalk is formed by the delta and b chains.</text>
</comment>
<comment type="subcellular location">
    <subcellularLocation>
        <location evidence="2">Cell membrane</location>
        <topology evidence="2">Multi-pass membrane protein</topology>
    </subcellularLocation>
</comment>
<comment type="miscellaneous">
    <text evidence="1">Dicyclohexylcarbodiimide (DCDD) binding to the active glutamate residue inhibits ATPase in vitro.</text>
</comment>
<comment type="similarity">
    <text evidence="2">Belongs to the ATPase C chain family.</text>
</comment>
<accession>P9WPS0</accession>
<accession>L0T6G8</accession>
<accession>P63691</accession>
<accession>Q10598</accession>
<sequence length="81" mass="8055">MDPTIAAGALIGGGLIMAGGAIGAGIGDGVAGNALISGVARQPEAQGRLFTPFFITVGLVEAAYFINLAFMALFVFATPVK</sequence>
<evidence type="ECO:0000250" key="1"/>
<evidence type="ECO:0000255" key="2">
    <source>
        <dbReference type="HAMAP-Rule" id="MF_01396"/>
    </source>
</evidence>
<dbReference type="EMBL" id="AE000516">
    <property type="protein sequence ID" value="AAK45607.1"/>
    <property type="molecule type" value="Genomic_DNA"/>
</dbReference>
<dbReference type="PIR" id="E70774">
    <property type="entry name" value="E70774"/>
</dbReference>
<dbReference type="RefSeq" id="WP_003406686.1">
    <property type="nucleotide sequence ID" value="NZ_KK341227.1"/>
</dbReference>
<dbReference type="SMR" id="P9WPS0"/>
<dbReference type="ChEMBL" id="CHEMBL4105701"/>
<dbReference type="KEGG" id="mtc:MT1345"/>
<dbReference type="PATRIC" id="fig|83331.31.peg.1451"/>
<dbReference type="HOGENOM" id="CLU_148047_1_2_11"/>
<dbReference type="Proteomes" id="UP000001020">
    <property type="component" value="Chromosome"/>
</dbReference>
<dbReference type="GO" id="GO:0005886">
    <property type="term" value="C:plasma membrane"/>
    <property type="evidence" value="ECO:0007669"/>
    <property type="project" value="UniProtKB-SubCell"/>
</dbReference>
<dbReference type="GO" id="GO:0045259">
    <property type="term" value="C:proton-transporting ATP synthase complex"/>
    <property type="evidence" value="ECO:0007669"/>
    <property type="project" value="UniProtKB-KW"/>
</dbReference>
<dbReference type="GO" id="GO:0033177">
    <property type="term" value="C:proton-transporting two-sector ATPase complex, proton-transporting domain"/>
    <property type="evidence" value="ECO:0007669"/>
    <property type="project" value="InterPro"/>
</dbReference>
<dbReference type="GO" id="GO:0008289">
    <property type="term" value="F:lipid binding"/>
    <property type="evidence" value="ECO:0007669"/>
    <property type="project" value="UniProtKB-KW"/>
</dbReference>
<dbReference type="GO" id="GO:0046933">
    <property type="term" value="F:proton-transporting ATP synthase activity, rotational mechanism"/>
    <property type="evidence" value="ECO:0007669"/>
    <property type="project" value="UniProtKB-UniRule"/>
</dbReference>
<dbReference type="CDD" id="cd18185">
    <property type="entry name" value="ATP-synt_Fo_c_ATPE"/>
    <property type="match status" value="1"/>
</dbReference>
<dbReference type="FunFam" id="1.20.20.10:FF:000010">
    <property type="entry name" value="ATP synthase subunit c"/>
    <property type="match status" value="1"/>
</dbReference>
<dbReference type="Gene3D" id="1.20.20.10">
    <property type="entry name" value="F1F0 ATP synthase subunit C"/>
    <property type="match status" value="1"/>
</dbReference>
<dbReference type="HAMAP" id="MF_01396">
    <property type="entry name" value="ATP_synth_c_bact"/>
    <property type="match status" value="1"/>
</dbReference>
<dbReference type="InterPro" id="IPR005953">
    <property type="entry name" value="ATP_synth_csu_bac/chlpt"/>
</dbReference>
<dbReference type="InterPro" id="IPR000454">
    <property type="entry name" value="ATP_synth_F0_csu"/>
</dbReference>
<dbReference type="InterPro" id="IPR020537">
    <property type="entry name" value="ATP_synth_F0_csu_DDCD_BS"/>
</dbReference>
<dbReference type="InterPro" id="IPR038662">
    <property type="entry name" value="ATP_synth_F0_csu_sf"/>
</dbReference>
<dbReference type="InterPro" id="IPR002379">
    <property type="entry name" value="ATPase_proteolipid_c-like_dom"/>
</dbReference>
<dbReference type="InterPro" id="IPR035921">
    <property type="entry name" value="F/V-ATP_Csub_sf"/>
</dbReference>
<dbReference type="NCBIfam" id="TIGR01260">
    <property type="entry name" value="ATP_synt_c"/>
    <property type="match status" value="1"/>
</dbReference>
<dbReference type="NCBIfam" id="NF004532">
    <property type="entry name" value="PRK05880.1"/>
    <property type="match status" value="1"/>
</dbReference>
<dbReference type="Pfam" id="PF00137">
    <property type="entry name" value="ATP-synt_C"/>
    <property type="match status" value="1"/>
</dbReference>
<dbReference type="PRINTS" id="PR00124">
    <property type="entry name" value="ATPASEC"/>
</dbReference>
<dbReference type="SUPFAM" id="SSF81333">
    <property type="entry name" value="F1F0 ATP synthase subunit C"/>
    <property type="match status" value="1"/>
</dbReference>
<dbReference type="PROSITE" id="PS00605">
    <property type="entry name" value="ATPASE_C"/>
    <property type="match status" value="1"/>
</dbReference>
<gene>
    <name evidence="2" type="primary">atpE</name>
    <name type="ordered locus">MT1345</name>
</gene>
<name>ATPL_MYCTO</name>
<protein>
    <recommendedName>
        <fullName evidence="2">ATP synthase subunit c</fullName>
    </recommendedName>
    <alternativeName>
        <fullName evidence="2">ATP synthase F(0) sector subunit c</fullName>
    </alternativeName>
    <alternativeName>
        <fullName evidence="2">F-type ATPase subunit c</fullName>
        <shortName evidence="2">F-ATPase subunit c</shortName>
    </alternativeName>
    <alternativeName>
        <fullName evidence="2">Lipid-binding protein</fullName>
    </alternativeName>
</protein>